<evidence type="ECO:0000255" key="1">
    <source>
        <dbReference type="HAMAP-Rule" id="MF_00301"/>
    </source>
</evidence>
<sequence length="326" mass="36589">MAVYTDITEDELIRFLAAYEVGSLTSYKGIAEGVENSNFLLHTTKGAYILTLYEKRVNADDLPFFLGLMHHLAERGLSCPLPLPRADGKLLGTLSGRPAAVISFLEGMWLRKPEAQHCREVGRALASMHQAGEGFPLKRPNALSVEGWRPLWRNSEARADEVQAGLKDEIATELAFIEEHWPKDLPEGVIHADLFPDNVFFLGDRLSGLIDFYFACNDFLAYDVAICLNSWCFEKDGSYNITKGMALLSGYESVRRLTAEEIEALPLLARGSALRFFLTRLYDWLMTPPGALVVKKDPLEYLTKIRFHRAIVSSAEYGLRREEAPA</sequence>
<accession>Q92RG1</accession>
<proteinExistence type="inferred from homology"/>
<dbReference type="EC" id="2.7.1.39" evidence="1"/>
<dbReference type="EMBL" id="AL591688">
    <property type="protein sequence ID" value="CAC45485.1"/>
    <property type="molecule type" value="Genomic_DNA"/>
</dbReference>
<dbReference type="RefSeq" id="NP_385019.1">
    <property type="nucleotide sequence ID" value="NC_003047.1"/>
</dbReference>
<dbReference type="RefSeq" id="WP_010968913.1">
    <property type="nucleotide sequence ID" value="NC_003047.1"/>
</dbReference>
<dbReference type="SMR" id="Q92RG1"/>
<dbReference type="EnsemblBacteria" id="CAC45485">
    <property type="protein sequence ID" value="CAC45485"/>
    <property type="gene ID" value="SMc00017"/>
</dbReference>
<dbReference type="KEGG" id="sme:SMc00017"/>
<dbReference type="PATRIC" id="fig|266834.11.peg.2311"/>
<dbReference type="eggNOG" id="COG2334">
    <property type="taxonomic scope" value="Bacteria"/>
</dbReference>
<dbReference type="HOGENOM" id="CLU_053300_0_0_5"/>
<dbReference type="OrthoDB" id="9777460at2"/>
<dbReference type="UniPathway" id="UPA00050">
    <property type="reaction ID" value="UER00064"/>
</dbReference>
<dbReference type="Proteomes" id="UP000001976">
    <property type="component" value="Chromosome"/>
</dbReference>
<dbReference type="GO" id="GO:0005524">
    <property type="term" value="F:ATP binding"/>
    <property type="evidence" value="ECO:0007669"/>
    <property type="project" value="UniProtKB-KW"/>
</dbReference>
<dbReference type="GO" id="GO:0004413">
    <property type="term" value="F:homoserine kinase activity"/>
    <property type="evidence" value="ECO:0007669"/>
    <property type="project" value="UniProtKB-UniRule"/>
</dbReference>
<dbReference type="GO" id="GO:0009088">
    <property type="term" value="P:threonine biosynthetic process"/>
    <property type="evidence" value="ECO:0007669"/>
    <property type="project" value="UniProtKB-UniRule"/>
</dbReference>
<dbReference type="CDD" id="cd05153">
    <property type="entry name" value="HomoserineK_II"/>
    <property type="match status" value="1"/>
</dbReference>
<dbReference type="Gene3D" id="3.90.1200.10">
    <property type="match status" value="1"/>
</dbReference>
<dbReference type="Gene3D" id="3.30.200.20">
    <property type="entry name" value="Phosphorylase Kinase, domain 1"/>
    <property type="match status" value="1"/>
</dbReference>
<dbReference type="HAMAP" id="MF_00301">
    <property type="entry name" value="Homoser_kinase_2"/>
    <property type="match status" value="1"/>
</dbReference>
<dbReference type="InterPro" id="IPR002575">
    <property type="entry name" value="Aminoglycoside_PTrfase"/>
</dbReference>
<dbReference type="InterPro" id="IPR005280">
    <property type="entry name" value="Homoserine_kinase_II"/>
</dbReference>
<dbReference type="InterPro" id="IPR011009">
    <property type="entry name" value="Kinase-like_dom_sf"/>
</dbReference>
<dbReference type="InterPro" id="IPR050249">
    <property type="entry name" value="Pseudomonas-type_ThrB"/>
</dbReference>
<dbReference type="NCBIfam" id="NF003558">
    <property type="entry name" value="PRK05231.1"/>
    <property type="match status" value="1"/>
</dbReference>
<dbReference type="NCBIfam" id="TIGR00938">
    <property type="entry name" value="thrB_alt"/>
    <property type="match status" value="1"/>
</dbReference>
<dbReference type="PANTHER" id="PTHR21064:SF6">
    <property type="entry name" value="AMINOGLYCOSIDE PHOSPHOTRANSFERASE DOMAIN-CONTAINING PROTEIN"/>
    <property type="match status" value="1"/>
</dbReference>
<dbReference type="PANTHER" id="PTHR21064">
    <property type="entry name" value="AMINOGLYCOSIDE PHOSPHOTRANSFERASE DOMAIN-CONTAINING PROTEIN-RELATED"/>
    <property type="match status" value="1"/>
</dbReference>
<dbReference type="Pfam" id="PF01636">
    <property type="entry name" value="APH"/>
    <property type="match status" value="1"/>
</dbReference>
<dbReference type="SUPFAM" id="SSF56112">
    <property type="entry name" value="Protein kinase-like (PK-like)"/>
    <property type="match status" value="1"/>
</dbReference>
<organism>
    <name type="scientific">Rhizobium meliloti (strain 1021)</name>
    <name type="common">Ensifer meliloti</name>
    <name type="synonym">Sinorhizobium meliloti</name>
    <dbReference type="NCBI Taxonomy" id="266834"/>
    <lineage>
        <taxon>Bacteria</taxon>
        <taxon>Pseudomonadati</taxon>
        <taxon>Pseudomonadota</taxon>
        <taxon>Alphaproteobacteria</taxon>
        <taxon>Hyphomicrobiales</taxon>
        <taxon>Rhizobiaceae</taxon>
        <taxon>Sinorhizobium/Ensifer group</taxon>
        <taxon>Sinorhizobium</taxon>
    </lineage>
</organism>
<keyword id="KW-0028">Amino-acid biosynthesis</keyword>
<keyword id="KW-0067">ATP-binding</keyword>
<keyword id="KW-0418">Kinase</keyword>
<keyword id="KW-0547">Nucleotide-binding</keyword>
<keyword id="KW-1185">Reference proteome</keyword>
<keyword id="KW-0791">Threonine biosynthesis</keyword>
<keyword id="KW-0808">Transferase</keyword>
<gene>
    <name evidence="1" type="primary">thrB</name>
    <name type="ordered locus">R00913</name>
    <name type="ORF">SMc00017</name>
</gene>
<reference key="1">
    <citation type="journal article" date="2001" name="Proc. Natl. Acad. Sci. U.S.A.">
        <title>Analysis of the chromosome sequence of the legume symbiont Sinorhizobium meliloti strain 1021.</title>
        <authorList>
            <person name="Capela D."/>
            <person name="Barloy-Hubler F."/>
            <person name="Gouzy J."/>
            <person name="Bothe G."/>
            <person name="Ampe F."/>
            <person name="Batut J."/>
            <person name="Boistard P."/>
            <person name="Becker A."/>
            <person name="Boutry M."/>
            <person name="Cadieu E."/>
            <person name="Dreano S."/>
            <person name="Gloux S."/>
            <person name="Godrie T."/>
            <person name="Goffeau A."/>
            <person name="Kahn D."/>
            <person name="Kiss E."/>
            <person name="Lelaure V."/>
            <person name="Masuy D."/>
            <person name="Pohl T."/>
            <person name="Portetelle D."/>
            <person name="Puehler A."/>
            <person name="Purnelle B."/>
            <person name="Ramsperger U."/>
            <person name="Renard C."/>
            <person name="Thebault P."/>
            <person name="Vandenbol M."/>
            <person name="Weidner S."/>
            <person name="Galibert F."/>
        </authorList>
    </citation>
    <scope>NUCLEOTIDE SEQUENCE [LARGE SCALE GENOMIC DNA]</scope>
    <source>
        <strain>1021</strain>
    </source>
</reference>
<reference key="2">
    <citation type="journal article" date="2001" name="Science">
        <title>The composite genome of the legume symbiont Sinorhizobium meliloti.</title>
        <authorList>
            <person name="Galibert F."/>
            <person name="Finan T.M."/>
            <person name="Long S.R."/>
            <person name="Puehler A."/>
            <person name="Abola P."/>
            <person name="Ampe F."/>
            <person name="Barloy-Hubler F."/>
            <person name="Barnett M.J."/>
            <person name="Becker A."/>
            <person name="Boistard P."/>
            <person name="Bothe G."/>
            <person name="Boutry M."/>
            <person name="Bowser L."/>
            <person name="Buhrmester J."/>
            <person name="Cadieu E."/>
            <person name="Capela D."/>
            <person name="Chain P."/>
            <person name="Cowie A."/>
            <person name="Davis R.W."/>
            <person name="Dreano S."/>
            <person name="Federspiel N.A."/>
            <person name="Fisher R.F."/>
            <person name="Gloux S."/>
            <person name="Godrie T."/>
            <person name="Goffeau A."/>
            <person name="Golding B."/>
            <person name="Gouzy J."/>
            <person name="Gurjal M."/>
            <person name="Hernandez-Lucas I."/>
            <person name="Hong A."/>
            <person name="Huizar L."/>
            <person name="Hyman R.W."/>
            <person name="Jones T."/>
            <person name="Kahn D."/>
            <person name="Kahn M.L."/>
            <person name="Kalman S."/>
            <person name="Keating D.H."/>
            <person name="Kiss E."/>
            <person name="Komp C."/>
            <person name="Lelaure V."/>
            <person name="Masuy D."/>
            <person name="Palm C."/>
            <person name="Peck M.C."/>
            <person name="Pohl T.M."/>
            <person name="Portetelle D."/>
            <person name="Purnelle B."/>
            <person name="Ramsperger U."/>
            <person name="Surzycki R."/>
            <person name="Thebault P."/>
            <person name="Vandenbol M."/>
            <person name="Vorhoelter F.J."/>
            <person name="Weidner S."/>
            <person name="Wells D.H."/>
            <person name="Wong K."/>
            <person name="Yeh K.-C."/>
            <person name="Batut J."/>
        </authorList>
    </citation>
    <scope>NUCLEOTIDE SEQUENCE [LARGE SCALE GENOMIC DNA]</scope>
    <source>
        <strain>1021</strain>
    </source>
</reference>
<feature type="chain" id="PRO_0000172197" description="Homoserine kinase">
    <location>
        <begin position="1"/>
        <end position="326"/>
    </location>
</feature>
<comment type="catalytic activity">
    <reaction evidence="1">
        <text>L-homoserine + ATP = O-phospho-L-homoserine + ADP + H(+)</text>
        <dbReference type="Rhea" id="RHEA:13985"/>
        <dbReference type="ChEBI" id="CHEBI:15378"/>
        <dbReference type="ChEBI" id="CHEBI:30616"/>
        <dbReference type="ChEBI" id="CHEBI:57476"/>
        <dbReference type="ChEBI" id="CHEBI:57590"/>
        <dbReference type="ChEBI" id="CHEBI:456216"/>
        <dbReference type="EC" id="2.7.1.39"/>
    </reaction>
</comment>
<comment type="pathway">
    <text evidence="1">Amino-acid biosynthesis; L-threonine biosynthesis; L-threonine from L-aspartate: step 4/5.</text>
</comment>
<comment type="similarity">
    <text evidence="1">Belongs to the pseudomonas-type ThrB family.</text>
</comment>
<protein>
    <recommendedName>
        <fullName evidence="1">Homoserine kinase</fullName>
        <shortName evidence="1">HK</shortName>
        <shortName evidence="1">HSK</shortName>
        <ecNumber evidence="1">2.7.1.39</ecNumber>
    </recommendedName>
</protein>
<name>KHSE_RHIME</name>